<evidence type="ECO:0000255" key="1"/>
<evidence type="ECO:0000256" key="2">
    <source>
        <dbReference type="SAM" id="MobiDB-lite"/>
    </source>
</evidence>
<evidence type="ECO:0000269" key="3">
    <source>
    </source>
</evidence>
<evidence type="ECO:0000305" key="4"/>
<evidence type="ECO:0000312" key="5">
    <source>
        <dbReference type="Proteomes" id="UP000001940"/>
    </source>
</evidence>
<evidence type="ECO:0000312" key="6">
    <source>
        <dbReference type="WormBase" id="C26C6.5a"/>
    </source>
</evidence>
<evidence type="ECO:0000312" key="7">
    <source>
        <dbReference type="WormBase" id="C26C6.5b"/>
    </source>
</evidence>
<sequence>MAQVQQVPSSPMNGIPEKNGNGLSIEESASTAVAALAHIQNGAVLFHGTPTKDLNGASTSIDTDDLQLSPSDLRRRSTRASALKAQEKIKLKDDIVQGPQKRANDDDDMEDEELGDEINEQSAPKKRRLENGKEFDQTCFRFGLRANNEGEVYAMTDESENSSIHESEMEVVRYHYEKMKNKEPDEEQLRERLNMRREAENQLREEEAKLLVLRKMKDSQTRAITKLAAETKAADLAEATSAAYKPAVATNGKSVTNGKNSMIESNNKTMNGLKNLSIPQQLELLQKLSSQSPAAKQAYIMAKKNPAQTTQLFQQLITINNQNLQKQKELSAAETNASASASPAVQQSQQAQQPQQAQITQSKLLNQQTPAQRIQAARLAFRAQADKQLTTIPTQKSQPHDITFLPNPNASAFLALHGLDLVVQHVLKDRSNETPYAGPSYECEECKTECAHTWKAIGSTQDDLHLYCENCVRSAQKRKNRTDQTALLKRAFQKITAQEKLLQEFEKKIAEGQLEQYAEAKAAAPATSQTIPTSSTATVSSIPLVPRLPQIPSSTGSSTPTQAVKTSTPIHSTPKSSSSSAKKTAAQLQQQSMQGMNQLFSTAMLRNNPQMQQMLQMYQALAMGGGAANMANNQMAMLFQAQAMQAAQAQVARAQAAKAQAAQAQAAQAQAQAQANREANQQSMLIQALMSNGQVNVQALQQLQKLTPEQQKALIEVVKRQTRK</sequence>
<gene>
    <name evidence="7" type="primary">dcp-66</name>
    <name evidence="7" type="ORF">C26C6.5</name>
</gene>
<organism evidence="5">
    <name type="scientific">Caenorhabditis elegans</name>
    <dbReference type="NCBI Taxonomy" id="6239"/>
    <lineage>
        <taxon>Eukaryota</taxon>
        <taxon>Metazoa</taxon>
        <taxon>Ecdysozoa</taxon>
        <taxon>Nematoda</taxon>
        <taxon>Chromadorea</taxon>
        <taxon>Rhabditida</taxon>
        <taxon>Rhabditina</taxon>
        <taxon>Rhabditomorpha</taxon>
        <taxon>Rhabditoidea</taxon>
        <taxon>Rhabditidae</taxon>
        <taxon>Peloderinae</taxon>
        <taxon>Caenorhabditis</taxon>
    </lineage>
</organism>
<protein>
    <recommendedName>
        <fullName evidence="4">Transcription factor dcp-66</fullName>
    </recommendedName>
    <alternativeName>
        <fullName evidence="7">Deacetylase complex protein dcp-66</fullName>
    </alternativeName>
</protein>
<dbReference type="EMBL" id="BX284601">
    <property type="protein sequence ID" value="CAA96601.3"/>
    <property type="molecule type" value="Genomic_DNA"/>
</dbReference>
<dbReference type="EMBL" id="BX284601">
    <property type="protein sequence ID" value="CAD56560.3"/>
    <property type="molecule type" value="Genomic_DNA"/>
</dbReference>
<dbReference type="RefSeq" id="NP_492111.3">
    <molecule id="G5ED89-2"/>
    <property type="nucleotide sequence ID" value="NM_059710.8"/>
</dbReference>
<dbReference type="RefSeq" id="NP_871831.3">
    <molecule id="G5ED89-1"/>
    <property type="nucleotide sequence ID" value="NM_182031.6"/>
</dbReference>
<dbReference type="SMR" id="G5ED89"/>
<dbReference type="FunCoup" id="G5ED89">
    <property type="interactions" value="1874"/>
</dbReference>
<dbReference type="IntAct" id="G5ED89">
    <property type="interactions" value="18"/>
</dbReference>
<dbReference type="STRING" id="6239.C26C6.5b.1"/>
<dbReference type="PaxDb" id="6239-C26C6.5b"/>
<dbReference type="EnsemblMetazoa" id="C26C6.5a.1">
    <molecule id="G5ED89-2"/>
    <property type="protein sequence ID" value="C26C6.5a.1"/>
    <property type="gene ID" value="WBGene00000938"/>
</dbReference>
<dbReference type="EnsemblMetazoa" id="C26C6.5b.1">
    <molecule id="G5ED89-1"/>
    <property type="protein sequence ID" value="C26C6.5b.1"/>
    <property type="gene ID" value="WBGene00000938"/>
</dbReference>
<dbReference type="GeneID" id="172507"/>
<dbReference type="KEGG" id="cel:CELE_C26C6.5"/>
<dbReference type="AGR" id="WB:WBGene00000938"/>
<dbReference type="CTD" id="172507"/>
<dbReference type="WormBase" id="C26C6.5a">
    <molecule id="G5ED89-2"/>
    <property type="protein sequence ID" value="CE47783"/>
    <property type="gene ID" value="WBGene00000938"/>
    <property type="gene designation" value="dcp-66"/>
</dbReference>
<dbReference type="WormBase" id="C26C6.5b">
    <molecule id="G5ED89-1"/>
    <property type="protein sequence ID" value="CE47789"/>
    <property type="gene ID" value="WBGene00000938"/>
    <property type="gene designation" value="dcp-66"/>
</dbReference>
<dbReference type="eggNOG" id="KOG3740">
    <property type="taxonomic scope" value="Eukaryota"/>
</dbReference>
<dbReference type="GeneTree" id="ENSGT00390000004097"/>
<dbReference type="HOGENOM" id="CLU_385068_0_0_1"/>
<dbReference type="InParanoid" id="G5ED89"/>
<dbReference type="OMA" id="QLQWNPL"/>
<dbReference type="OrthoDB" id="8186989at2759"/>
<dbReference type="Reactome" id="R-CEL-6804758">
    <property type="pathway name" value="Regulation of TP53 Activity through Acetylation"/>
</dbReference>
<dbReference type="SignaLink" id="G5ED89"/>
<dbReference type="PRO" id="PR:G5ED89"/>
<dbReference type="Proteomes" id="UP000001940">
    <property type="component" value="Chromosome I"/>
</dbReference>
<dbReference type="Bgee" id="WBGene00000938">
    <property type="expression patterns" value="Expressed in pharyngeal muscle cell (C elegans) and 4 other cell types or tissues"/>
</dbReference>
<dbReference type="ExpressionAtlas" id="G5ED89">
    <property type="expression patterns" value="baseline and differential"/>
</dbReference>
<dbReference type="GO" id="GO:0005634">
    <property type="term" value="C:nucleus"/>
    <property type="evidence" value="ECO:0000315"/>
    <property type="project" value="UniProtKB"/>
</dbReference>
<dbReference type="GO" id="GO:0016581">
    <property type="term" value="C:NuRD complex"/>
    <property type="evidence" value="ECO:0000315"/>
    <property type="project" value="UniProtKB"/>
</dbReference>
<dbReference type="GO" id="GO:0003677">
    <property type="term" value="F:DNA binding"/>
    <property type="evidence" value="ECO:0007669"/>
    <property type="project" value="UniProtKB-KW"/>
</dbReference>
<dbReference type="GO" id="GO:0000981">
    <property type="term" value="F:DNA-binding transcription factor activity, RNA polymerase II-specific"/>
    <property type="evidence" value="ECO:0000315"/>
    <property type="project" value="UniProtKB"/>
</dbReference>
<dbReference type="GO" id="GO:0006325">
    <property type="term" value="P:chromatin organization"/>
    <property type="evidence" value="ECO:0000315"/>
    <property type="project" value="UniProtKB"/>
</dbReference>
<dbReference type="GO" id="GO:0034514">
    <property type="term" value="P:mitochondrial unfolded protein response"/>
    <property type="evidence" value="ECO:0000315"/>
    <property type="project" value="UniProtKB"/>
</dbReference>
<dbReference type="GO" id="GO:0000122">
    <property type="term" value="P:negative regulation of transcription by RNA polymerase II"/>
    <property type="evidence" value="ECO:0000318"/>
    <property type="project" value="GO_Central"/>
</dbReference>
<dbReference type="GO" id="GO:0045944">
    <property type="term" value="P:positive regulation of transcription by RNA polymerase II"/>
    <property type="evidence" value="ECO:0000315"/>
    <property type="project" value="UniProtKB"/>
</dbReference>
<dbReference type="InterPro" id="IPR040386">
    <property type="entry name" value="P66"/>
</dbReference>
<dbReference type="PANTHER" id="PTHR13455:SF7">
    <property type="entry name" value="SIMJANG, ISOFORM E"/>
    <property type="match status" value="1"/>
</dbReference>
<dbReference type="PANTHER" id="PTHR13455">
    <property type="entry name" value="TRANSCRIPTIONAL REPRESSOR P66-RELATED"/>
    <property type="match status" value="1"/>
</dbReference>
<comment type="function">
    <text evidence="3">Transcription factor which binds to the 5'-CCATACATTA-3' motif found in the promoter region of pgp-12 and activates its expression in the excretory cell.</text>
</comment>
<comment type="subcellular location">
    <subcellularLocation>
        <location evidence="4">Nucleus</location>
    </subcellularLocation>
</comment>
<comment type="alternative products">
    <event type="alternative splicing"/>
    <isoform>
        <id>G5ED89-1</id>
        <name evidence="7">b</name>
        <sequence type="displayed"/>
    </isoform>
    <isoform>
        <id>G5ED89-2</id>
        <name evidence="6">a</name>
        <sequence type="described" ref="VSP_060799"/>
    </isoform>
</comment>
<comment type="tissue specificity">
    <text evidence="3">Expressed at low levels in excretory cell, pharynx, vulva, and posterior neurons in adults (PubMed:16159881). Strongly expressed in the excretory cell and more weakly in the pharynx in larva (PubMed:16159881). Embryonic expression in the excretory cell (PubMed:16159881).</text>
</comment>
<comment type="developmental stage">
    <text evidence="3">Expressed in embryo, larva and adult.</text>
</comment>
<proteinExistence type="evidence at transcript level"/>
<reference evidence="5" key="1">
    <citation type="journal article" date="1998" name="Science">
        <title>Genome sequence of the nematode C. elegans: a platform for investigating biology.</title>
        <authorList>
            <consortium name="The C. elegans sequencing consortium"/>
        </authorList>
    </citation>
    <scope>NUCLEOTIDE SEQUENCE [LARGE SCALE GENOMIC DNA]</scope>
    <source>
        <strain evidence="5">Bristol N2</strain>
    </source>
</reference>
<reference evidence="4" key="2">
    <citation type="journal article" date="2005" name="J. Biol. Chem.">
        <title>Distinct regulatory elements mediate similar expression patterns in the excretory cell of Caenorhabditis elegans.</title>
        <authorList>
            <person name="Zhao Z."/>
            <person name="Fang L."/>
            <person name="Chen N."/>
            <person name="Johnsen R.C."/>
            <person name="Stein L."/>
            <person name="Baillie D.L."/>
        </authorList>
    </citation>
    <scope>FUNCTION</scope>
    <scope>TISSUE SPECIFICITY</scope>
    <scope>DEVELOPMENTAL STAGE</scope>
</reference>
<name>DCP66_CAEEL</name>
<accession>G5ED89</accession>
<accession>G5ECM2</accession>
<keyword id="KW-0010">Activator</keyword>
<keyword id="KW-0025">Alternative splicing</keyword>
<keyword id="KW-0175">Coiled coil</keyword>
<keyword id="KW-0238">DNA-binding</keyword>
<keyword id="KW-0539">Nucleus</keyword>
<keyword id="KW-1185">Reference proteome</keyword>
<keyword id="KW-0804">Transcription</keyword>
<keyword id="KW-0805">Transcription regulation</keyword>
<feature type="chain" id="PRO_0000451520" description="Transcription factor dcp-66">
    <location>
        <begin position="1"/>
        <end position="724"/>
    </location>
</feature>
<feature type="region of interest" description="Disordered" evidence="2">
    <location>
        <begin position="1"/>
        <end position="23"/>
    </location>
</feature>
<feature type="region of interest" description="Disordered" evidence="2">
    <location>
        <begin position="55"/>
        <end position="129"/>
    </location>
</feature>
<feature type="region of interest" description="Disordered" evidence="2">
    <location>
        <begin position="328"/>
        <end position="361"/>
    </location>
</feature>
<feature type="region of interest" description="Disordered" evidence="2">
    <location>
        <begin position="523"/>
        <end position="590"/>
    </location>
</feature>
<feature type="coiled-coil region" evidence="1">
    <location>
        <begin position="186"/>
        <end position="216"/>
    </location>
</feature>
<feature type="compositionally biased region" description="Polar residues" evidence="2">
    <location>
        <begin position="1"/>
        <end position="12"/>
    </location>
</feature>
<feature type="compositionally biased region" description="Polar residues" evidence="2">
    <location>
        <begin position="56"/>
        <end position="70"/>
    </location>
</feature>
<feature type="compositionally biased region" description="Basic and acidic residues" evidence="2">
    <location>
        <begin position="85"/>
        <end position="95"/>
    </location>
</feature>
<feature type="compositionally biased region" description="Acidic residues" evidence="2">
    <location>
        <begin position="105"/>
        <end position="119"/>
    </location>
</feature>
<feature type="compositionally biased region" description="Low complexity" evidence="2">
    <location>
        <begin position="332"/>
        <end position="358"/>
    </location>
</feature>
<feature type="compositionally biased region" description="Polar residues" evidence="2">
    <location>
        <begin position="527"/>
        <end position="541"/>
    </location>
</feature>
<feature type="compositionally biased region" description="Polar residues" evidence="2">
    <location>
        <begin position="551"/>
        <end position="564"/>
    </location>
</feature>
<feature type="compositionally biased region" description="Low complexity" evidence="2">
    <location>
        <begin position="565"/>
        <end position="590"/>
    </location>
</feature>
<feature type="splice variant" id="VSP_060799" description="In isoform a." evidence="4">
    <location>
        <begin position="501"/>
        <end position="503"/>
    </location>
</feature>